<reference key="1">
    <citation type="journal article" date="2005" name="BMC Biol.">
        <title>The sequence of rice chromosomes 11 and 12, rich in disease resistance genes and recent gene duplications.</title>
        <authorList>
            <consortium name="The rice chromosomes 11 and 12 sequencing consortia"/>
        </authorList>
    </citation>
    <scope>NUCLEOTIDE SEQUENCE [LARGE SCALE GENOMIC DNA]</scope>
    <source>
        <strain>cv. Nipponbare</strain>
    </source>
</reference>
<reference key="2">
    <citation type="journal article" date="2005" name="Nature">
        <title>The map-based sequence of the rice genome.</title>
        <authorList>
            <consortium name="International rice genome sequencing project (IRGSP)"/>
        </authorList>
    </citation>
    <scope>NUCLEOTIDE SEQUENCE [LARGE SCALE GENOMIC DNA]</scope>
    <source>
        <strain>cv. Nipponbare</strain>
    </source>
</reference>
<reference key="3">
    <citation type="journal article" date="2008" name="Nucleic Acids Res.">
        <title>The rice annotation project database (RAP-DB): 2008 update.</title>
        <authorList>
            <consortium name="The rice annotation project (RAP)"/>
        </authorList>
    </citation>
    <scope>GENOME REANNOTATION</scope>
    <source>
        <strain>cv. Nipponbare</strain>
    </source>
</reference>
<reference key="4">
    <citation type="journal article" date="2013" name="Rice">
        <title>Improvement of the Oryza sativa Nipponbare reference genome using next generation sequence and optical map data.</title>
        <authorList>
            <person name="Kawahara Y."/>
            <person name="de la Bastide M."/>
            <person name="Hamilton J.P."/>
            <person name="Kanamori H."/>
            <person name="McCombie W.R."/>
            <person name="Ouyang S."/>
            <person name="Schwartz D.C."/>
            <person name="Tanaka T."/>
            <person name="Wu J."/>
            <person name="Zhou S."/>
            <person name="Childs K.L."/>
            <person name="Davidson R.M."/>
            <person name="Lin H."/>
            <person name="Quesada-Ocampo L."/>
            <person name="Vaillancourt B."/>
            <person name="Sakai H."/>
            <person name="Lee S.S."/>
            <person name="Kim J."/>
            <person name="Numa H."/>
            <person name="Itoh T."/>
            <person name="Buell C.R."/>
            <person name="Matsumoto T."/>
        </authorList>
    </citation>
    <scope>GENOME REANNOTATION</scope>
    <source>
        <strain>cv. Nipponbare</strain>
    </source>
</reference>
<reference key="5">
    <citation type="journal article" date="2005" name="PLoS Biol.">
        <title>The genomes of Oryza sativa: a history of duplications.</title>
        <authorList>
            <person name="Yu J."/>
            <person name="Wang J."/>
            <person name="Lin W."/>
            <person name="Li S."/>
            <person name="Li H."/>
            <person name="Zhou J."/>
            <person name="Ni P."/>
            <person name="Dong W."/>
            <person name="Hu S."/>
            <person name="Zeng C."/>
            <person name="Zhang J."/>
            <person name="Zhang Y."/>
            <person name="Li R."/>
            <person name="Xu Z."/>
            <person name="Li S."/>
            <person name="Li X."/>
            <person name="Zheng H."/>
            <person name="Cong L."/>
            <person name="Lin L."/>
            <person name="Yin J."/>
            <person name="Geng J."/>
            <person name="Li G."/>
            <person name="Shi J."/>
            <person name="Liu J."/>
            <person name="Lv H."/>
            <person name="Li J."/>
            <person name="Wang J."/>
            <person name="Deng Y."/>
            <person name="Ran L."/>
            <person name="Shi X."/>
            <person name="Wang X."/>
            <person name="Wu Q."/>
            <person name="Li C."/>
            <person name="Ren X."/>
            <person name="Wang J."/>
            <person name="Wang X."/>
            <person name="Li D."/>
            <person name="Liu D."/>
            <person name="Zhang X."/>
            <person name="Ji Z."/>
            <person name="Zhao W."/>
            <person name="Sun Y."/>
            <person name="Zhang Z."/>
            <person name="Bao J."/>
            <person name="Han Y."/>
            <person name="Dong L."/>
            <person name="Ji J."/>
            <person name="Chen P."/>
            <person name="Wu S."/>
            <person name="Liu J."/>
            <person name="Xiao Y."/>
            <person name="Bu D."/>
            <person name="Tan J."/>
            <person name="Yang L."/>
            <person name="Ye C."/>
            <person name="Zhang J."/>
            <person name="Xu J."/>
            <person name="Zhou Y."/>
            <person name="Yu Y."/>
            <person name="Zhang B."/>
            <person name="Zhuang S."/>
            <person name="Wei H."/>
            <person name="Liu B."/>
            <person name="Lei M."/>
            <person name="Yu H."/>
            <person name="Li Y."/>
            <person name="Xu H."/>
            <person name="Wei S."/>
            <person name="He X."/>
            <person name="Fang L."/>
            <person name="Zhang Z."/>
            <person name="Zhang Y."/>
            <person name="Huang X."/>
            <person name="Su Z."/>
            <person name="Tong W."/>
            <person name="Li J."/>
            <person name="Tong Z."/>
            <person name="Li S."/>
            <person name="Ye J."/>
            <person name="Wang L."/>
            <person name="Fang L."/>
            <person name="Lei T."/>
            <person name="Chen C.-S."/>
            <person name="Chen H.-C."/>
            <person name="Xu Z."/>
            <person name="Li H."/>
            <person name="Huang H."/>
            <person name="Zhang F."/>
            <person name="Xu H."/>
            <person name="Li N."/>
            <person name="Zhao C."/>
            <person name="Li S."/>
            <person name="Dong L."/>
            <person name="Huang Y."/>
            <person name="Li L."/>
            <person name="Xi Y."/>
            <person name="Qi Q."/>
            <person name="Li W."/>
            <person name="Zhang B."/>
            <person name="Hu W."/>
            <person name="Zhang Y."/>
            <person name="Tian X."/>
            <person name="Jiao Y."/>
            <person name="Liang X."/>
            <person name="Jin J."/>
            <person name="Gao L."/>
            <person name="Zheng W."/>
            <person name="Hao B."/>
            <person name="Liu S.-M."/>
            <person name="Wang W."/>
            <person name="Yuan L."/>
            <person name="Cao M."/>
            <person name="McDermott J."/>
            <person name="Samudrala R."/>
            <person name="Wang J."/>
            <person name="Wong G.K.-S."/>
            <person name="Yang H."/>
        </authorList>
    </citation>
    <scope>NUCLEOTIDE SEQUENCE [LARGE SCALE GENOMIC DNA]</scope>
    <source>
        <strain>cv. Nipponbare</strain>
    </source>
</reference>
<reference key="6">
    <citation type="journal article" date="2008" name="J. Integr. Plant Biol.">
        <title>Phylogenetic analysis of the plant-specific zinc finger-homeobox and mini zinc finger gene families.</title>
        <authorList>
            <person name="Hu W."/>
            <person name="dePamphilis C.W."/>
            <person name="Ma H."/>
        </authorList>
    </citation>
    <scope>GENE FAMILY</scope>
    <scope>NOMENCLATURE</scope>
</reference>
<protein>
    <recommendedName>
        <fullName>Mini zinc finger protein 2</fullName>
        <shortName>OsMIF2</shortName>
    </recommendedName>
</protein>
<gene>
    <name type="primary">MIF2</name>
    <name type="ordered locus">Os12g0124500</name>
    <name type="ordered locus">LOC_Os12g03110</name>
    <name type="ORF">OsJ_35065</name>
</gene>
<sequence length="105" mass="10818">MGPQQDRSAAKPYANGSTAAAAAAGRKENNKVVRYRECQRNHAASIGGHAVDGCREFMASGADGTAAALLCAACGCHQSFHRREVEAAAAECDCSSDTSSGTGRR</sequence>
<name>MIF2_ORYSJ</name>
<evidence type="ECO:0000250" key="1"/>
<evidence type="ECO:0000255" key="2">
    <source>
        <dbReference type="PROSITE-ProRule" id="PRU00856"/>
    </source>
</evidence>
<evidence type="ECO:0000256" key="3">
    <source>
        <dbReference type="SAM" id="MobiDB-lite"/>
    </source>
</evidence>
<evidence type="ECO:0000305" key="4"/>
<keyword id="KW-0963">Cytoplasm</keyword>
<keyword id="KW-0479">Metal-binding</keyword>
<keyword id="KW-1185">Reference proteome</keyword>
<keyword id="KW-0862">Zinc</keyword>
<keyword id="KW-0863">Zinc-finger</keyword>
<proteinExistence type="inferred from homology"/>
<feature type="chain" id="PRO_0000426030" description="Mini zinc finger protein 2">
    <location>
        <begin position="1"/>
        <end position="105"/>
    </location>
</feature>
<feature type="zinc finger region" description="ZF-HD dimerization-type; degenerate" evidence="2">
    <location>
        <begin position="35"/>
        <end position="84"/>
    </location>
</feature>
<feature type="region of interest" description="Disordered" evidence="3">
    <location>
        <begin position="1"/>
        <end position="29"/>
    </location>
</feature>
<comment type="function">
    <text evidence="1">Inhibits zinc finger homeodomain (ZHD) transcription factors, by interacting with them to prevent both their nuclear localization and their DNA-binding properties.</text>
</comment>
<comment type="subunit">
    <text evidence="1">Homo- and heterodimers.</text>
</comment>
<comment type="subcellular location">
    <subcellularLocation>
        <location evidence="1">Cytoplasm</location>
    </subcellularLocation>
</comment>
<comment type="sequence caution" evidence="4">
    <conflict type="erroneous gene model prediction">
        <sequence resource="EMBL-CDS" id="ABA96296"/>
    </conflict>
</comment>
<organism>
    <name type="scientific">Oryza sativa subsp. japonica</name>
    <name type="common">Rice</name>
    <dbReference type="NCBI Taxonomy" id="39947"/>
    <lineage>
        <taxon>Eukaryota</taxon>
        <taxon>Viridiplantae</taxon>
        <taxon>Streptophyta</taxon>
        <taxon>Embryophyta</taxon>
        <taxon>Tracheophyta</taxon>
        <taxon>Spermatophyta</taxon>
        <taxon>Magnoliopsida</taxon>
        <taxon>Liliopsida</taxon>
        <taxon>Poales</taxon>
        <taxon>Poaceae</taxon>
        <taxon>BOP clade</taxon>
        <taxon>Oryzoideae</taxon>
        <taxon>Oryzeae</taxon>
        <taxon>Oryzinae</taxon>
        <taxon>Oryza</taxon>
        <taxon>Oryza sativa</taxon>
    </lineage>
</organism>
<accession>B9GBM3</accession>
<accession>A0A0N7KTI1</accession>
<accession>Q2QYC5</accession>
<dbReference type="EMBL" id="DP000011">
    <property type="protein sequence ID" value="ABA96296.1"/>
    <property type="status" value="ALT_SEQ"/>
    <property type="molecule type" value="Genomic_DNA"/>
</dbReference>
<dbReference type="EMBL" id="AP008218">
    <property type="protein sequence ID" value="BAH95493.1"/>
    <property type="molecule type" value="Genomic_DNA"/>
</dbReference>
<dbReference type="EMBL" id="AP014968">
    <property type="protein sequence ID" value="BAT15682.1"/>
    <property type="molecule type" value="Genomic_DNA"/>
</dbReference>
<dbReference type="EMBL" id="CM000149">
    <property type="protein sequence ID" value="EEE52680.1"/>
    <property type="molecule type" value="Genomic_DNA"/>
</dbReference>
<dbReference type="RefSeq" id="XP_015620648.1">
    <property type="nucleotide sequence ID" value="XM_015765162.1"/>
</dbReference>
<dbReference type="FunCoup" id="B9GBM3">
    <property type="interactions" value="1778"/>
</dbReference>
<dbReference type="PaxDb" id="39947-B9GBM3"/>
<dbReference type="EnsemblPlants" id="Os12t0124500-01">
    <property type="protein sequence ID" value="Os12t0124500-01"/>
    <property type="gene ID" value="Os12g0124500"/>
</dbReference>
<dbReference type="Gramene" id="Os12t0124500-01">
    <property type="protein sequence ID" value="Os12t0124500-01"/>
    <property type="gene ID" value="Os12g0124500"/>
</dbReference>
<dbReference type="KEGG" id="dosa:Os12g0124500"/>
<dbReference type="eggNOG" id="ENOG502S2AW">
    <property type="taxonomic scope" value="Eukaryota"/>
</dbReference>
<dbReference type="HOGENOM" id="CLU_123565_2_0_1"/>
<dbReference type="InParanoid" id="B9GBM3"/>
<dbReference type="OMA" id="VCDCSSP"/>
<dbReference type="OrthoDB" id="682018at2759"/>
<dbReference type="Proteomes" id="UP000000763">
    <property type="component" value="Chromosome 12"/>
</dbReference>
<dbReference type="Proteomes" id="UP000007752">
    <property type="component" value="Chromosome 12"/>
</dbReference>
<dbReference type="Proteomes" id="UP000059680">
    <property type="component" value="Chromosome 12"/>
</dbReference>
<dbReference type="GO" id="GO:0005737">
    <property type="term" value="C:cytoplasm"/>
    <property type="evidence" value="ECO:0007669"/>
    <property type="project" value="UniProtKB-SubCell"/>
</dbReference>
<dbReference type="GO" id="GO:0005634">
    <property type="term" value="C:nucleus"/>
    <property type="evidence" value="ECO:0000318"/>
    <property type="project" value="GO_Central"/>
</dbReference>
<dbReference type="GO" id="GO:0003700">
    <property type="term" value="F:DNA-binding transcription factor activity"/>
    <property type="evidence" value="ECO:0000318"/>
    <property type="project" value="GO_Central"/>
</dbReference>
<dbReference type="GO" id="GO:0000976">
    <property type="term" value="F:transcription cis-regulatory region binding"/>
    <property type="evidence" value="ECO:0000318"/>
    <property type="project" value="GO_Central"/>
</dbReference>
<dbReference type="GO" id="GO:0008270">
    <property type="term" value="F:zinc ion binding"/>
    <property type="evidence" value="ECO:0007669"/>
    <property type="project" value="UniProtKB-KW"/>
</dbReference>
<dbReference type="GO" id="GO:0006355">
    <property type="term" value="P:regulation of DNA-templated transcription"/>
    <property type="evidence" value="ECO:0000318"/>
    <property type="project" value="GO_Central"/>
</dbReference>
<dbReference type="InterPro" id="IPR006456">
    <property type="entry name" value="ZF_HD_homeobox_Cys/His_dimer"/>
</dbReference>
<dbReference type="NCBIfam" id="TIGR01566">
    <property type="entry name" value="ZF_HD_prot_N"/>
    <property type="match status" value="1"/>
</dbReference>
<dbReference type="PANTHER" id="PTHR31948:SF162">
    <property type="entry name" value="MINI ZINC FINGER PROTEIN 2"/>
    <property type="match status" value="1"/>
</dbReference>
<dbReference type="PANTHER" id="PTHR31948">
    <property type="entry name" value="ZINC-FINGER HOMEODOMAIN PROTEIN 2"/>
    <property type="match status" value="1"/>
</dbReference>
<dbReference type="Pfam" id="PF04770">
    <property type="entry name" value="ZF-HD_dimer"/>
    <property type="match status" value="1"/>
</dbReference>
<dbReference type="PROSITE" id="PS51523">
    <property type="entry name" value="ZF_HD_DIMER"/>
    <property type="match status" value="1"/>
</dbReference>